<sequence length="512" mass="58083">MADTVRKPQKVVIVGAGPVGSLAALYAAARGDEVEVYELRGDLRDPSTIPLNFTKSINLALSERGINAMKHSNREELTKNVLRDTIPMYGRMIHGKDRGQLWEAAQAYDVHGRAINAVDRSTLNNALLDELEHTPNVKLFFNHKLTGADFRANKAWFERRVPGEAPLPNSANRVPEIEVDFDFMLGADGAHSAVRYHMMKFARVDYQQEYIDTLWCEFRIAPTENGEFRISPNHLHIWPGREFMFIALPSADKSFTCTLFAPAVHYTYLASSPQKLLDFFDVHFPGVSPELIPPADLQEQFATNPHLPLISLKCKPHHFGSSVAIVGDAAHAVLPFYGQGLNAGLEDIRVLFEVLDKHSVYDLDASHEARREAREKAFQAYTDQRCADTHAINDLSKENYVEMRWGVKTPLYKLRKSIEEILDRYVPSLGWQTQYSRVSFSNQRYSDVIKLARRQGTVLGLGLGSTFITAVGVAGYMMWKNPKQYSPLCFMRYCLRHVSHIWVKFFRNTAYA</sequence>
<protein>
    <recommendedName>
        <fullName evidence="1">Kynurenine 3-monooxygenase</fullName>
        <ecNumber evidence="1">1.14.13.9</ecNumber>
    </recommendedName>
    <alternativeName>
        <fullName evidence="1">Biosynthesis of nicotinic acid protein 4</fullName>
    </alternativeName>
    <alternativeName>
        <fullName evidence="1">Kynurenine 3-hydroxylase</fullName>
    </alternativeName>
</protein>
<proteinExistence type="inferred from homology"/>
<organism>
    <name type="scientific">Aspergillus clavatus (strain ATCC 1007 / CBS 513.65 / DSM 816 / NCTC 3887 / NRRL 1 / QM 1276 / 107)</name>
    <dbReference type="NCBI Taxonomy" id="344612"/>
    <lineage>
        <taxon>Eukaryota</taxon>
        <taxon>Fungi</taxon>
        <taxon>Dikarya</taxon>
        <taxon>Ascomycota</taxon>
        <taxon>Pezizomycotina</taxon>
        <taxon>Eurotiomycetes</taxon>
        <taxon>Eurotiomycetidae</taxon>
        <taxon>Eurotiales</taxon>
        <taxon>Aspergillaceae</taxon>
        <taxon>Aspergillus</taxon>
        <taxon>Aspergillus subgen. Fumigati</taxon>
    </lineage>
</organism>
<gene>
    <name type="primary">bna4</name>
    <name type="ORF">ACLA_081480</name>
</gene>
<reference key="1">
    <citation type="journal article" date="2008" name="PLoS Genet.">
        <title>Genomic islands in the pathogenic filamentous fungus Aspergillus fumigatus.</title>
        <authorList>
            <person name="Fedorova N.D."/>
            <person name="Khaldi N."/>
            <person name="Joardar V.S."/>
            <person name="Maiti R."/>
            <person name="Amedeo P."/>
            <person name="Anderson M.J."/>
            <person name="Crabtree J."/>
            <person name="Silva J.C."/>
            <person name="Badger J.H."/>
            <person name="Albarraq A."/>
            <person name="Angiuoli S."/>
            <person name="Bussey H."/>
            <person name="Bowyer P."/>
            <person name="Cotty P.J."/>
            <person name="Dyer P.S."/>
            <person name="Egan A."/>
            <person name="Galens K."/>
            <person name="Fraser-Liggett C.M."/>
            <person name="Haas B.J."/>
            <person name="Inman J.M."/>
            <person name="Kent R."/>
            <person name="Lemieux S."/>
            <person name="Malavazi I."/>
            <person name="Orvis J."/>
            <person name="Roemer T."/>
            <person name="Ronning C.M."/>
            <person name="Sundaram J.P."/>
            <person name="Sutton G."/>
            <person name="Turner G."/>
            <person name="Venter J.C."/>
            <person name="White O.R."/>
            <person name="Whitty B.R."/>
            <person name="Youngman P."/>
            <person name="Wolfe K.H."/>
            <person name="Goldman G.H."/>
            <person name="Wortman J.R."/>
            <person name="Jiang B."/>
            <person name="Denning D.W."/>
            <person name="Nierman W.C."/>
        </authorList>
    </citation>
    <scope>NUCLEOTIDE SEQUENCE [LARGE SCALE GENOMIC DNA]</scope>
    <source>
        <strain>ATCC 1007 / CBS 513.65 / DSM 816 / NCTC 3887 / NRRL 1 / QM 1276 / 107</strain>
    </source>
</reference>
<feature type="chain" id="PRO_0000361916" description="Kynurenine 3-monooxygenase">
    <location>
        <begin position="1"/>
        <end position="512"/>
    </location>
</feature>
<name>KMO_ASPCL</name>
<dbReference type="EC" id="1.14.13.9" evidence="1"/>
<dbReference type="EMBL" id="DS027060">
    <property type="protein sequence ID" value="EAW06460.1"/>
    <property type="molecule type" value="Genomic_DNA"/>
</dbReference>
<dbReference type="RefSeq" id="XP_001267886.1">
    <property type="nucleotide sequence ID" value="XM_001267885.1"/>
</dbReference>
<dbReference type="SMR" id="A1CT23"/>
<dbReference type="STRING" id="344612.A1CT23"/>
<dbReference type="EnsemblFungi" id="EAW06460">
    <property type="protein sequence ID" value="EAW06460"/>
    <property type="gene ID" value="ACLA_081480"/>
</dbReference>
<dbReference type="GeneID" id="4700205"/>
<dbReference type="KEGG" id="act:ACLA_081480"/>
<dbReference type="VEuPathDB" id="FungiDB:ACLA_081480"/>
<dbReference type="eggNOG" id="KOG2614">
    <property type="taxonomic scope" value="Eukaryota"/>
</dbReference>
<dbReference type="HOGENOM" id="CLU_023210_2_1_1"/>
<dbReference type="OMA" id="REFMFIA"/>
<dbReference type="OrthoDB" id="10053569at2759"/>
<dbReference type="UniPathway" id="UPA00253">
    <property type="reaction ID" value="UER00328"/>
</dbReference>
<dbReference type="Proteomes" id="UP000006701">
    <property type="component" value="Unassembled WGS sequence"/>
</dbReference>
<dbReference type="GO" id="GO:0005741">
    <property type="term" value="C:mitochondrial outer membrane"/>
    <property type="evidence" value="ECO:0007669"/>
    <property type="project" value="UniProtKB-SubCell"/>
</dbReference>
<dbReference type="GO" id="GO:0071949">
    <property type="term" value="F:FAD binding"/>
    <property type="evidence" value="ECO:0007669"/>
    <property type="project" value="InterPro"/>
</dbReference>
<dbReference type="GO" id="GO:0004502">
    <property type="term" value="F:kynurenine 3-monooxygenase activity"/>
    <property type="evidence" value="ECO:0007669"/>
    <property type="project" value="UniProtKB-UniRule"/>
</dbReference>
<dbReference type="GO" id="GO:0034354">
    <property type="term" value="P:'de novo' NAD biosynthetic process from L-tryptophan"/>
    <property type="evidence" value="ECO:0007669"/>
    <property type="project" value="UniProtKB-UniRule"/>
</dbReference>
<dbReference type="GO" id="GO:0043420">
    <property type="term" value="P:anthranilate metabolic process"/>
    <property type="evidence" value="ECO:0007669"/>
    <property type="project" value="UniProtKB-UniRule"/>
</dbReference>
<dbReference type="GO" id="GO:0070189">
    <property type="term" value="P:kynurenine metabolic process"/>
    <property type="evidence" value="ECO:0007669"/>
    <property type="project" value="TreeGrafter"/>
</dbReference>
<dbReference type="GO" id="GO:0006569">
    <property type="term" value="P:L-tryptophan catabolic process"/>
    <property type="evidence" value="ECO:0007669"/>
    <property type="project" value="UniProtKB-UniRule"/>
</dbReference>
<dbReference type="GO" id="GO:0019805">
    <property type="term" value="P:quinolinate biosynthetic process"/>
    <property type="evidence" value="ECO:0007669"/>
    <property type="project" value="UniProtKB-UniRule"/>
</dbReference>
<dbReference type="FunFam" id="3.50.50.60:FF:000129">
    <property type="entry name" value="Kynurenine 3-monooxygenase"/>
    <property type="match status" value="1"/>
</dbReference>
<dbReference type="Gene3D" id="3.50.50.60">
    <property type="entry name" value="FAD/NAD(P)-binding domain"/>
    <property type="match status" value="1"/>
</dbReference>
<dbReference type="HAMAP" id="MF_01971">
    <property type="entry name" value="Kynurenine_monooxygenase"/>
    <property type="match status" value="1"/>
</dbReference>
<dbReference type="InterPro" id="IPR002938">
    <property type="entry name" value="FAD-bd"/>
</dbReference>
<dbReference type="InterPro" id="IPR036188">
    <property type="entry name" value="FAD/NAD-bd_sf"/>
</dbReference>
<dbReference type="InterPro" id="IPR027545">
    <property type="entry name" value="Kynurenine_monooxygenase"/>
</dbReference>
<dbReference type="PANTHER" id="PTHR46028">
    <property type="entry name" value="KYNURENINE 3-MONOOXYGENASE"/>
    <property type="match status" value="1"/>
</dbReference>
<dbReference type="PANTHER" id="PTHR46028:SF2">
    <property type="entry name" value="KYNURENINE 3-MONOOXYGENASE"/>
    <property type="match status" value="1"/>
</dbReference>
<dbReference type="Pfam" id="PF01494">
    <property type="entry name" value="FAD_binding_3"/>
    <property type="match status" value="1"/>
</dbReference>
<dbReference type="PRINTS" id="PR00420">
    <property type="entry name" value="RNGMNOXGNASE"/>
</dbReference>
<dbReference type="SUPFAM" id="SSF51905">
    <property type="entry name" value="FAD/NAD(P)-binding domain"/>
    <property type="match status" value="1"/>
</dbReference>
<keyword id="KW-0274">FAD</keyword>
<keyword id="KW-0285">Flavoprotein</keyword>
<keyword id="KW-0472">Membrane</keyword>
<keyword id="KW-0496">Mitochondrion</keyword>
<keyword id="KW-1000">Mitochondrion outer membrane</keyword>
<keyword id="KW-0503">Monooxygenase</keyword>
<keyword id="KW-0521">NADP</keyword>
<keyword id="KW-0560">Oxidoreductase</keyword>
<keyword id="KW-0662">Pyridine nucleotide biosynthesis</keyword>
<keyword id="KW-1185">Reference proteome</keyword>
<comment type="function">
    <text evidence="1">Catalyzes the hydroxylation of L-kynurenine (L-Kyn) to form 3-hydroxy-L-kynurenine (L-3OHKyn). Required for synthesis of quinolinic acid.</text>
</comment>
<comment type="catalytic activity">
    <reaction evidence="1">
        <text>L-kynurenine + NADPH + O2 + H(+) = 3-hydroxy-L-kynurenine + NADP(+) + H2O</text>
        <dbReference type="Rhea" id="RHEA:20545"/>
        <dbReference type="ChEBI" id="CHEBI:15377"/>
        <dbReference type="ChEBI" id="CHEBI:15378"/>
        <dbReference type="ChEBI" id="CHEBI:15379"/>
        <dbReference type="ChEBI" id="CHEBI:57783"/>
        <dbReference type="ChEBI" id="CHEBI:57959"/>
        <dbReference type="ChEBI" id="CHEBI:58125"/>
        <dbReference type="ChEBI" id="CHEBI:58349"/>
        <dbReference type="EC" id="1.14.13.9"/>
    </reaction>
</comment>
<comment type="cofactor">
    <cofactor evidence="1">
        <name>FAD</name>
        <dbReference type="ChEBI" id="CHEBI:57692"/>
    </cofactor>
</comment>
<comment type="pathway">
    <text evidence="1">Cofactor biosynthesis; NAD(+) biosynthesis; quinolinate from L-kynurenine: step 1/3.</text>
</comment>
<comment type="subcellular location">
    <subcellularLocation>
        <location evidence="1">Mitochondrion outer membrane</location>
    </subcellularLocation>
</comment>
<comment type="similarity">
    <text evidence="1">Belongs to the aromatic-ring hydroxylase family. KMO subfamily.</text>
</comment>
<accession>A1CT23</accession>
<evidence type="ECO:0000255" key="1">
    <source>
        <dbReference type="HAMAP-Rule" id="MF_03018"/>
    </source>
</evidence>